<evidence type="ECO:0000255" key="1">
    <source>
        <dbReference type="HAMAP-Rule" id="MF_01365"/>
    </source>
</evidence>
<evidence type="ECO:0000269" key="2">
    <source>
    </source>
</evidence>
<evidence type="ECO:0000269" key="3">
    <source>
    </source>
</evidence>
<evidence type="ECO:0000269" key="4">
    <source>
    </source>
</evidence>
<evidence type="ECO:0000269" key="5">
    <source>
    </source>
</evidence>
<evidence type="ECO:0000305" key="6"/>
<evidence type="ECO:0007829" key="7">
    <source>
        <dbReference type="PDB" id="1VQ8"/>
    </source>
</evidence>
<organism>
    <name type="scientific">Haloarcula marismortui (strain ATCC 43049 / DSM 3752 / JCM 8966 / VKM B-1809)</name>
    <name type="common">Halobacterium marismortui</name>
    <dbReference type="NCBI Taxonomy" id="272569"/>
    <lineage>
        <taxon>Archaea</taxon>
        <taxon>Methanobacteriati</taxon>
        <taxon>Methanobacteriota</taxon>
        <taxon>Stenosarchaea group</taxon>
        <taxon>Halobacteria</taxon>
        <taxon>Halobacteriales</taxon>
        <taxon>Haloarculaceae</taxon>
        <taxon>Haloarcula</taxon>
    </lineage>
</organism>
<sequence length="178" mass="19944">MPRVELEIPEDVDAEQDHLDITVEGDNGSVTRRLWYPDIDVSVDGDTVVIESDEDNAKTMSTIGTFQSHIENMFHGVTEGWEYGMEVFYSHFPMQVNVEGDEVVIENFLGEKAPRRTTIHGDTDVEIDGEELTVSGPDIEAVGQTAADIEQLTRINDKDVRVFQDGVYITRKPNRGDA</sequence>
<feature type="initiator methionine" description="Removed" evidence="4 5">
    <location>
        <position position="1"/>
    </location>
</feature>
<feature type="chain" id="PRO_0000131083" description="Large ribosomal subunit protein uL6">
    <location>
        <begin position="2"/>
        <end position="178"/>
    </location>
</feature>
<feature type="sequence variant">
    <original>R</original>
    <variation>S</variation>
    <location>
        <position position="3"/>
    </location>
</feature>
<feature type="sequence variant">
    <original>E</original>
    <variation>S</variation>
    <location>
        <position position="24"/>
    </location>
</feature>
<feature type="strand" evidence="7">
    <location>
        <begin position="3"/>
        <end position="7"/>
    </location>
</feature>
<feature type="strand" evidence="7">
    <location>
        <begin position="13"/>
        <end position="17"/>
    </location>
</feature>
<feature type="strand" evidence="7">
    <location>
        <begin position="20"/>
        <end position="25"/>
    </location>
</feature>
<feature type="strand" evidence="7">
    <location>
        <begin position="28"/>
        <end position="33"/>
    </location>
</feature>
<feature type="strand" evidence="7">
    <location>
        <begin position="40"/>
        <end position="44"/>
    </location>
</feature>
<feature type="strand" evidence="7">
    <location>
        <begin position="47"/>
        <end position="51"/>
    </location>
</feature>
<feature type="helix" evidence="7">
    <location>
        <begin position="57"/>
        <end position="77"/>
    </location>
</feature>
<feature type="strand" evidence="7">
    <location>
        <begin position="81"/>
        <end position="88"/>
    </location>
</feature>
<feature type="strand" evidence="7">
    <location>
        <begin position="90"/>
        <end position="92"/>
    </location>
</feature>
<feature type="strand" evidence="7">
    <location>
        <begin position="95"/>
        <end position="99"/>
    </location>
</feature>
<feature type="strand" evidence="7">
    <location>
        <begin position="102"/>
        <end position="107"/>
    </location>
</feature>
<feature type="helix" evidence="7">
    <location>
        <begin position="108"/>
        <end position="110"/>
    </location>
</feature>
<feature type="strand" evidence="7">
    <location>
        <begin position="115"/>
        <end position="118"/>
    </location>
</feature>
<feature type="strand" evidence="7">
    <location>
        <begin position="124"/>
        <end position="128"/>
    </location>
</feature>
<feature type="strand" evidence="7">
    <location>
        <begin position="131"/>
        <end position="137"/>
    </location>
</feature>
<feature type="helix" evidence="7">
    <location>
        <begin position="139"/>
        <end position="151"/>
    </location>
</feature>
<feature type="strand" evidence="7">
    <location>
        <begin position="156"/>
        <end position="158"/>
    </location>
</feature>
<feature type="turn" evidence="7">
    <location>
        <begin position="160"/>
        <end position="162"/>
    </location>
</feature>
<feature type="strand" evidence="7">
    <location>
        <begin position="166"/>
        <end position="171"/>
    </location>
</feature>
<reference key="1">
    <citation type="journal article" date="1991" name="Mol. Gen. Genet.">
        <title>Organization and nucleotide sequence of ten ribosomal protein genes from the region equivalent to the spectinomycin operon in the archaebacterium Halobacterium marismortui.</title>
        <authorList>
            <person name="Scholzen T."/>
            <person name="Arndt E."/>
        </authorList>
    </citation>
    <scope>NUCLEOTIDE SEQUENCE [GENOMIC DNA]</scope>
</reference>
<reference key="2">
    <citation type="journal article" date="2004" name="Genome Res.">
        <title>Genome sequence of Haloarcula marismortui: a halophilic archaeon from the Dead Sea.</title>
        <authorList>
            <person name="Baliga N.S."/>
            <person name="Bonneau R."/>
            <person name="Facciotti M.T."/>
            <person name="Pan M."/>
            <person name="Glusman G."/>
            <person name="Deutsch E.W."/>
            <person name="Shannon P."/>
            <person name="Chiu Y."/>
            <person name="Weng R.S."/>
            <person name="Gan R.R."/>
            <person name="Hung P."/>
            <person name="Date S.V."/>
            <person name="Marcotte E."/>
            <person name="Hood L."/>
            <person name="Ng W.V."/>
        </authorList>
    </citation>
    <scope>NUCLEOTIDE SEQUENCE [LARGE SCALE GENOMIC DNA]</scope>
    <source>
        <strain>ATCC 43049 / DSM 3752 / JCM 8966 / VKM B-1809</strain>
    </source>
</reference>
<reference key="3">
    <citation type="journal article" date="1987" name="Biol. Chem. Hoppe-Seyler">
        <title>The N-terminal sequence of ribosomal protein L10 from the archaebacterium Halobacterium marismortui and its relationship to eubacterial protein L6 and other ribosomal proteins.</title>
        <authorList>
            <person name="Dijk J."/>
            <person name="van den Broek R."/>
            <person name="Nasiulas G."/>
            <person name="Beck A."/>
            <person name="Reinhardt R."/>
            <person name="Wittmann-Liebold B."/>
        </authorList>
    </citation>
    <scope>PROTEIN SEQUENCE OF 2-55</scope>
</reference>
<reference key="4">
    <citation type="journal article" date="1988" name="Biochemistry">
        <title>Extended N-terminal sequencing of proteins of archaebacterial ribosomes blotted from two-dimensional gels onto glass fiber and poly(vinylidene difluoride) membrane.</title>
        <authorList>
            <person name="Walsh M.J."/>
            <person name="McDougall J."/>
            <person name="Wittmann-Liebold B."/>
        </authorList>
    </citation>
    <scope>PROTEIN SEQUENCE OF 2-31</scope>
</reference>
<reference key="5">
    <citation type="journal article" date="1999" name="Nature">
        <title>Placement of protein and RNA structures into a 5 A-resolution map of the 50S ribosomal subunit.</title>
        <authorList>
            <person name="Ban N."/>
            <person name="Nissen P."/>
            <person name="Hansen J."/>
            <person name="Capel M."/>
            <person name="Moore P.B."/>
            <person name="Steitz T.A."/>
        </authorList>
    </citation>
    <scope>3D-STRUCTURE MODELING</scope>
</reference>
<reference key="6">
    <citation type="journal article" date="2000" name="Science">
        <title>The complete atomic structure of the large ribosomal subunit at 2.4 A resolution.</title>
        <authorList>
            <person name="Ban N."/>
            <person name="Nissen P."/>
            <person name="Hansen J."/>
            <person name="Moore P.B."/>
            <person name="Steitz T.A."/>
        </authorList>
    </citation>
    <scope>X-RAY CRYSTALLOGRAPHY (2.4 ANGSTROMS) OF THE 50S SUBUNIT</scope>
    <source>
        <strain>ATCC 43049 / DSM 3752 / JCM 8966 / VKM B-1809</strain>
    </source>
</reference>
<reference key="7">
    <citation type="journal article" date="2000" name="Science">
        <title>The structural basis of ribosome activity in peptide bond synthesis.</title>
        <authorList>
            <person name="Nissen P."/>
            <person name="Hansen J."/>
            <person name="Ban N."/>
            <person name="Moore P.B."/>
            <person name="Steitz T.A."/>
        </authorList>
    </citation>
    <scope>X-RAY CRYSTALLOGRAPHY (3.0 ANGSTROMS) OF THE 50S SUBUNIT</scope>
    <source>
        <strain>ATCC 43049 / DSM 3752 / JCM 8966 / VKM B-1809</strain>
    </source>
</reference>
<reference key="8">
    <citation type="journal article" date="2002" name="Nat. Struct. Biol.">
        <title>A pre-translocational intermediate in protein synthesis observed in crystals of enzymatically active 50S subunits.</title>
        <authorList>
            <person name="Schmeing T.M."/>
            <person name="Seila A.C."/>
            <person name="Hansen J.L."/>
            <person name="Freeborn B."/>
            <person name="Soukup J.K."/>
            <person name="Scaringe S.A."/>
            <person name="Strobel S.A."/>
            <person name="Moore P.B."/>
            <person name="Steitz T.A."/>
        </authorList>
    </citation>
    <scope>X-RAY CRYSTALLOGRAPHY (3.1 ANGSTROMS) OF THE 50S SUBUNIT</scope>
    <source>
        <strain>ATCC 43049 / DSM 3752 / JCM 8966 / VKM B-1809</strain>
    </source>
</reference>
<reference key="9">
    <citation type="journal article" date="2001" name="EMBO J.">
        <title>The kink-turn: a new RNA secondary structure motif.</title>
        <authorList>
            <person name="Klein D.J."/>
            <person name="Schmeing T.M."/>
            <person name="Moore P.B."/>
            <person name="Steitz T.A."/>
        </authorList>
    </citation>
    <scope>X-RAY CRYSTALLOGRAPHY (2.4 ANGSTROMS) OF THE 50S SUBUNIT</scope>
    <source>
        <strain>ATCC 43049 / DSM 3752 / JCM 8966 / VKM B-1809</strain>
    </source>
</reference>
<reference key="10">
    <citation type="journal article" date="2002" name="Mol. Cell">
        <title>The structures of four macrolide antibiotics bound to the large ribosomal subunit.</title>
        <authorList>
            <person name="Hansen J.L."/>
            <person name="Ippolito J.A."/>
            <person name="Ban N."/>
            <person name="Nissen P."/>
            <person name="Moore P.B."/>
            <person name="Steitz T.A."/>
        </authorList>
    </citation>
    <scope>X-RAY CRYSTALLOGRAPHY (3.0 ANGSTROMS) OF THE 50S SUBUNIT IN COMPLEX WITH FOUR MACROLIDE ANTIBIOTICS</scope>
    <source>
        <strain>ATCC 43049 / DSM 3752 / JCM 8966 / VKM B-1809</strain>
    </source>
</reference>
<reference key="11">
    <citation type="journal article" date="2002" name="Proc. Natl. Acad. Sci. U.S.A.">
        <title>Structural insights into peptide bond formation.</title>
        <authorList>
            <person name="Hansen J.L."/>
            <person name="Schmeing T.M."/>
            <person name="Moore P.B."/>
            <person name="Steitz T.A."/>
        </authorList>
    </citation>
    <scope>X-RAY CRYSTALLOGRAPHY (2.8 ANGSTROMS) OF THE 50S SUBUNIT</scope>
    <source>
        <strain>ATCC 43049 / DSM 3752 / JCM 8966 / VKM B-1809</strain>
    </source>
</reference>
<reference key="12">
    <citation type="journal article" date="2003" name="J. Mol. Biol.">
        <title>Structures of five antibiotics bound at the peptidyl transferase center of the large ribosomal subunit.</title>
        <authorList>
            <person name="Hansen J.L."/>
            <person name="Moore P.B."/>
            <person name="Steitz T.A."/>
        </authorList>
    </citation>
    <scope>X-RAY CRYSTALLOGRAPHY (3.0 ANGSTROMS) OF THE 50S SUBUNIT IN COMPLEX WITH FIVE ANTIBIOTICS AT THE PEPTIDYL TRANSFERASE CENTER</scope>
    <source>
        <strain>ATCC 43049 / DSM 3752 / JCM 8966 / VKM B-1809</strain>
    </source>
</reference>
<reference key="13">
    <citation type="journal article" date="2003" name="RNA">
        <title>Structures of deacylated tRNA mimics bound to the E site of the large ribosomal subunit.</title>
        <authorList>
            <person name="Schmeing T.M."/>
            <person name="Moore P.B."/>
            <person name="Steitz T.A."/>
        </authorList>
    </citation>
    <scope>X-RAY CRYSTALLOGRAPHY (2.9 ANGSTROMS) OF THE 50S SUBUNIT WITH TWO DIFFERENT E SITE SUBSTRATES</scope>
</reference>
<reference key="14">
    <citation type="journal article" date="2013" name="Acta Crystallogr. D">
        <title>Revisiting the Haloarcula marismortui 50S ribosomal subunit model.</title>
        <authorList>
            <person name="Gabdulkhakov A."/>
            <person name="Nikonov S."/>
            <person name="Garber M."/>
        </authorList>
    </citation>
    <scope>X-RAY CRYSTALLOGRAPHY (2.4 ANGSTROMS) OF THE 50S SUBUNIT</scope>
</reference>
<gene>
    <name evidence="1" type="primary">rpl6</name>
    <name type="ordered locus">rrnAC1596</name>
</gene>
<name>RL6_HALMA</name>
<accession>P14135</accession>
<accession>P12739</accession>
<accession>Q5V1T8</accession>
<proteinExistence type="evidence at protein level"/>
<dbReference type="EMBL" id="X58395">
    <property type="protein sequence ID" value="CAA41287.1"/>
    <property type="molecule type" value="Genomic_DNA"/>
</dbReference>
<dbReference type="EMBL" id="AY596297">
    <property type="protein sequence ID" value="AAV46514.1"/>
    <property type="molecule type" value="Genomic_DNA"/>
</dbReference>
<dbReference type="PIR" id="S16538">
    <property type="entry name" value="R5HS6L"/>
</dbReference>
<dbReference type="RefSeq" id="WP_011223740.1">
    <property type="nucleotide sequence ID" value="NC_006396.1"/>
</dbReference>
<dbReference type="PDB" id="1C04">
    <property type="method" value="X-ray"/>
    <property type="resolution" value="5.00 A"/>
    <property type="chains" value="B=21-25"/>
</dbReference>
<dbReference type="PDB" id="1FFK">
    <property type="method" value="X-ray"/>
    <property type="resolution" value="2.40 A"/>
    <property type="chains" value="1=2-178"/>
</dbReference>
<dbReference type="PDB" id="1JJ2">
    <property type="method" value="X-ray"/>
    <property type="resolution" value="2.40 A"/>
    <property type="chains" value="E=2-178"/>
</dbReference>
<dbReference type="PDB" id="1K73">
    <property type="method" value="X-ray"/>
    <property type="resolution" value="3.01 A"/>
    <property type="chains" value="G=2-178"/>
</dbReference>
<dbReference type="PDB" id="1K8A">
    <property type="method" value="X-ray"/>
    <property type="resolution" value="3.00 A"/>
    <property type="chains" value="G=2-178"/>
</dbReference>
<dbReference type="PDB" id="1K9M">
    <property type="method" value="X-ray"/>
    <property type="resolution" value="3.00 A"/>
    <property type="chains" value="G=2-178"/>
</dbReference>
<dbReference type="PDB" id="1KC8">
    <property type="method" value="X-ray"/>
    <property type="resolution" value="3.01 A"/>
    <property type="chains" value="G=2-178"/>
</dbReference>
<dbReference type="PDB" id="1KD1">
    <property type="method" value="X-ray"/>
    <property type="resolution" value="3.00 A"/>
    <property type="chains" value="G=2-178"/>
</dbReference>
<dbReference type="PDB" id="1KQS">
    <property type="method" value="X-ray"/>
    <property type="resolution" value="3.10 A"/>
    <property type="chains" value="E=2-178"/>
</dbReference>
<dbReference type="PDB" id="1M1K">
    <property type="method" value="X-ray"/>
    <property type="resolution" value="3.20 A"/>
    <property type="chains" value="G=2-178"/>
</dbReference>
<dbReference type="PDB" id="1M90">
    <property type="method" value="X-ray"/>
    <property type="resolution" value="2.80 A"/>
    <property type="chains" value="G=2-178"/>
</dbReference>
<dbReference type="PDB" id="1N8R">
    <property type="method" value="X-ray"/>
    <property type="resolution" value="3.00 A"/>
    <property type="chains" value="G=2-178"/>
</dbReference>
<dbReference type="PDB" id="1NJI">
    <property type="method" value="X-ray"/>
    <property type="resolution" value="3.00 A"/>
    <property type="chains" value="G=2-178"/>
</dbReference>
<dbReference type="PDB" id="1Q7Y">
    <property type="method" value="X-ray"/>
    <property type="resolution" value="3.20 A"/>
    <property type="chains" value="G=2-178"/>
</dbReference>
<dbReference type="PDB" id="1Q81">
    <property type="method" value="X-ray"/>
    <property type="resolution" value="2.95 A"/>
    <property type="chains" value="G=2-178"/>
</dbReference>
<dbReference type="PDB" id="1Q82">
    <property type="method" value="X-ray"/>
    <property type="resolution" value="2.98 A"/>
    <property type="chains" value="G=2-178"/>
</dbReference>
<dbReference type="PDB" id="1Q86">
    <property type="method" value="X-ray"/>
    <property type="resolution" value="3.00 A"/>
    <property type="chains" value="G=2-178"/>
</dbReference>
<dbReference type="PDB" id="1QVF">
    <property type="method" value="X-ray"/>
    <property type="resolution" value="3.10 A"/>
    <property type="chains" value="E=2-178"/>
</dbReference>
<dbReference type="PDB" id="1QVG">
    <property type="method" value="X-ray"/>
    <property type="resolution" value="2.90 A"/>
    <property type="chains" value="E=2-178"/>
</dbReference>
<dbReference type="PDB" id="1S72">
    <property type="method" value="X-ray"/>
    <property type="resolution" value="2.40 A"/>
    <property type="chains" value="E=1-178"/>
</dbReference>
<dbReference type="PDB" id="1VQ4">
    <property type="method" value="X-ray"/>
    <property type="resolution" value="2.70 A"/>
    <property type="chains" value="E=1-178"/>
</dbReference>
<dbReference type="PDB" id="1VQ5">
    <property type="method" value="X-ray"/>
    <property type="resolution" value="2.60 A"/>
    <property type="chains" value="E=1-178"/>
</dbReference>
<dbReference type="PDB" id="1VQ6">
    <property type="method" value="X-ray"/>
    <property type="resolution" value="2.70 A"/>
    <property type="chains" value="E=1-178"/>
</dbReference>
<dbReference type="PDB" id="1VQ7">
    <property type="method" value="X-ray"/>
    <property type="resolution" value="2.50 A"/>
    <property type="chains" value="E=1-178"/>
</dbReference>
<dbReference type="PDB" id="1VQ8">
    <property type="method" value="X-ray"/>
    <property type="resolution" value="2.20 A"/>
    <property type="chains" value="E=1-178"/>
</dbReference>
<dbReference type="PDB" id="1VQ9">
    <property type="method" value="X-ray"/>
    <property type="resolution" value="2.40 A"/>
    <property type="chains" value="E=1-178"/>
</dbReference>
<dbReference type="PDB" id="1VQK">
    <property type="method" value="X-ray"/>
    <property type="resolution" value="2.30 A"/>
    <property type="chains" value="E=1-178"/>
</dbReference>
<dbReference type="PDB" id="1VQL">
    <property type="method" value="X-ray"/>
    <property type="resolution" value="2.30 A"/>
    <property type="chains" value="E=1-178"/>
</dbReference>
<dbReference type="PDB" id="1VQM">
    <property type="method" value="X-ray"/>
    <property type="resolution" value="2.30 A"/>
    <property type="chains" value="E=1-178"/>
</dbReference>
<dbReference type="PDB" id="1VQN">
    <property type="method" value="X-ray"/>
    <property type="resolution" value="2.40 A"/>
    <property type="chains" value="E=1-178"/>
</dbReference>
<dbReference type="PDB" id="1VQO">
    <property type="method" value="X-ray"/>
    <property type="resolution" value="2.20 A"/>
    <property type="chains" value="E=1-178"/>
</dbReference>
<dbReference type="PDB" id="1VQP">
    <property type="method" value="X-ray"/>
    <property type="resolution" value="2.25 A"/>
    <property type="chains" value="E=1-178"/>
</dbReference>
<dbReference type="PDB" id="1W2B">
    <property type="method" value="X-ray"/>
    <property type="resolution" value="3.50 A"/>
    <property type="chains" value="E=2-178"/>
</dbReference>
<dbReference type="PDB" id="1YHQ">
    <property type="method" value="X-ray"/>
    <property type="resolution" value="2.40 A"/>
    <property type="chains" value="E=1-178"/>
</dbReference>
<dbReference type="PDB" id="1YI2">
    <property type="method" value="X-ray"/>
    <property type="resolution" value="2.65 A"/>
    <property type="chains" value="E=1-178"/>
</dbReference>
<dbReference type="PDB" id="1YIJ">
    <property type="method" value="X-ray"/>
    <property type="resolution" value="2.60 A"/>
    <property type="chains" value="E=1-178"/>
</dbReference>
<dbReference type="PDB" id="1YIT">
    <property type="method" value="X-ray"/>
    <property type="resolution" value="2.80 A"/>
    <property type="chains" value="E=1-178"/>
</dbReference>
<dbReference type="PDB" id="1YJ9">
    <property type="method" value="X-ray"/>
    <property type="resolution" value="2.90 A"/>
    <property type="chains" value="E=1-178"/>
</dbReference>
<dbReference type="PDB" id="1YJN">
    <property type="method" value="X-ray"/>
    <property type="resolution" value="3.00 A"/>
    <property type="chains" value="E=1-178"/>
</dbReference>
<dbReference type="PDB" id="1YJW">
    <property type="method" value="X-ray"/>
    <property type="resolution" value="2.90 A"/>
    <property type="chains" value="E=1-178"/>
</dbReference>
<dbReference type="PDB" id="2OTJ">
    <property type="method" value="X-ray"/>
    <property type="resolution" value="2.90 A"/>
    <property type="chains" value="E=1-178"/>
</dbReference>
<dbReference type="PDB" id="2OTL">
    <property type="method" value="X-ray"/>
    <property type="resolution" value="2.70 A"/>
    <property type="chains" value="E=1-178"/>
</dbReference>
<dbReference type="PDB" id="2QA4">
    <property type="method" value="X-ray"/>
    <property type="resolution" value="3.00 A"/>
    <property type="chains" value="E=1-178"/>
</dbReference>
<dbReference type="PDB" id="2QEX">
    <property type="method" value="X-ray"/>
    <property type="resolution" value="2.90 A"/>
    <property type="chains" value="E=1-178"/>
</dbReference>
<dbReference type="PDB" id="3CC2">
    <property type="method" value="X-ray"/>
    <property type="resolution" value="2.40 A"/>
    <property type="chains" value="E=1-178"/>
</dbReference>
<dbReference type="PDB" id="3CC4">
    <property type="method" value="X-ray"/>
    <property type="resolution" value="2.70 A"/>
    <property type="chains" value="E=1-178"/>
</dbReference>
<dbReference type="PDB" id="3CC7">
    <property type="method" value="X-ray"/>
    <property type="resolution" value="2.70 A"/>
    <property type="chains" value="E=1-178"/>
</dbReference>
<dbReference type="PDB" id="3CCE">
    <property type="method" value="X-ray"/>
    <property type="resolution" value="2.75 A"/>
    <property type="chains" value="E=1-178"/>
</dbReference>
<dbReference type="PDB" id="3CCJ">
    <property type="method" value="X-ray"/>
    <property type="resolution" value="2.70 A"/>
    <property type="chains" value="E=1-178"/>
</dbReference>
<dbReference type="PDB" id="3CCL">
    <property type="method" value="X-ray"/>
    <property type="resolution" value="2.90 A"/>
    <property type="chains" value="E=1-178"/>
</dbReference>
<dbReference type="PDB" id="3CCM">
    <property type="method" value="X-ray"/>
    <property type="resolution" value="2.55 A"/>
    <property type="chains" value="E=1-178"/>
</dbReference>
<dbReference type="PDB" id="3CCQ">
    <property type="method" value="X-ray"/>
    <property type="resolution" value="2.90 A"/>
    <property type="chains" value="E=1-178"/>
</dbReference>
<dbReference type="PDB" id="3CCR">
    <property type="method" value="X-ray"/>
    <property type="resolution" value="3.00 A"/>
    <property type="chains" value="E=1-178"/>
</dbReference>
<dbReference type="PDB" id="3CCS">
    <property type="method" value="X-ray"/>
    <property type="resolution" value="2.95 A"/>
    <property type="chains" value="E=1-178"/>
</dbReference>
<dbReference type="PDB" id="3CCU">
    <property type="method" value="X-ray"/>
    <property type="resolution" value="2.80 A"/>
    <property type="chains" value="E=1-178"/>
</dbReference>
<dbReference type="PDB" id="3CCV">
    <property type="method" value="X-ray"/>
    <property type="resolution" value="2.90 A"/>
    <property type="chains" value="E=1-178"/>
</dbReference>
<dbReference type="PDB" id="3CD6">
    <property type="method" value="X-ray"/>
    <property type="resolution" value="2.75 A"/>
    <property type="chains" value="E=1-178"/>
</dbReference>
<dbReference type="PDB" id="3CMA">
    <property type="method" value="X-ray"/>
    <property type="resolution" value="2.80 A"/>
    <property type="chains" value="E=1-178"/>
</dbReference>
<dbReference type="PDB" id="3CME">
    <property type="method" value="X-ray"/>
    <property type="resolution" value="2.95 A"/>
    <property type="chains" value="E=1-178"/>
</dbReference>
<dbReference type="PDB" id="3CPW">
    <property type="method" value="X-ray"/>
    <property type="resolution" value="2.70 A"/>
    <property type="chains" value="E=1-178"/>
</dbReference>
<dbReference type="PDB" id="3CXC">
    <property type="method" value="X-ray"/>
    <property type="resolution" value="3.00 A"/>
    <property type="chains" value="E=2-178"/>
</dbReference>
<dbReference type="PDB" id="3G4S">
    <property type="method" value="X-ray"/>
    <property type="resolution" value="3.20 A"/>
    <property type="chains" value="E=2-173"/>
</dbReference>
<dbReference type="PDB" id="3G6E">
    <property type="method" value="X-ray"/>
    <property type="resolution" value="2.70 A"/>
    <property type="chains" value="E=2-173"/>
</dbReference>
<dbReference type="PDB" id="3G71">
    <property type="method" value="X-ray"/>
    <property type="resolution" value="2.85 A"/>
    <property type="chains" value="E=2-173"/>
</dbReference>
<dbReference type="PDB" id="3I55">
    <property type="method" value="X-ray"/>
    <property type="resolution" value="3.11 A"/>
    <property type="chains" value="E=1-178"/>
</dbReference>
<dbReference type="PDB" id="3I56">
    <property type="method" value="X-ray"/>
    <property type="resolution" value="2.90 A"/>
    <property type="chains" value="E=1-178"/>
</dbReference>
<dbReference type="PDB" id="3OW2">
    <property type="method" value="X-ray"/>
    <property type="resolution" value="2.70 A"/>
    <property type="chains" value="E=2-173"/>
</dbReference>
<dbReference type="PDB" id="4ADX">
    <property type="method" value="EM"/>
    <property type="resolution" value="6.60 A"/>
    <property type="chains" value="E=1-178"/>
</dbReference>
<dbReference type="PDB" id="4V9F">
    <property type="method" value="X-ray"/>
    <property type="resolution" value="2.40 A"/>
    <property type="chains" value="E=1-178"/>
</dbReference>
<dbReference type="PDBsum" id="1C04"/>
<dbReference type="PDBsum" id="1FFK"/>
<dbReference type="PDBsum" id="1JJ2"/>
<dbReference type="PDBsum" id="1K73"/>
<dbReference type="PDBsum" id="1K8A"/>
<dbReference type="PDBsum" id="1K9M"/>
<dbReference type="PDBsum" id="1KC8"/>
<dbReference type="PDBsum" id="1KD1"/>
<dbReference type="PDBsum" id="1KQS"/>
<dbReference type="PDBsum" id="1M1K"/>
<dbReference type="PDBsum" id="1M90"/>
<dbReference type="PDBsum" id="1N8R"/>
<dbReference type="PDBsum" id="1NJI"/>
<dbReference type="PDBsum" id="1Q7Y"/>
<dbReference type="PDBsum" id="1Q81"/>
<dbReference type="PDBsum" id="1Q82"/>
<dbReference type="PDBsum" id="1Q86"/>
<dbReference type="PDBsum" id="1QVF"/>
<dbReference type="PDBsum" id="1QVG"/>
<dbReference type="PDBsum" id="1S72"/>
<dbReference type="PDBsum" id="1VQ4"/>
<dbReference type="PDBsum" id="1VQ5"/>
<dbReference type="PDBsum" id="1VQ6"/>
<dbReference type="PDBsum" id="1VQ7"/>
<dbReference type="PDBsum" id="1VQ8"/>
<dbReference type="PDBsum" id="1VQ9"/>
<dbReference type="PDBsum" id="1VQK"/>
<dbReference type="PDBsum" id="1VQL"/>
<dbReference type="PDBsum" id="1VQM"/>
<dbReference type="PDBsum" id="1VQN"/>
<dbReference type="PDBsum" id="1VQO"/>
<dbReference type="PDBsum" id="1VQP"/>
<dbReference type="PDBsum" id="1W2B"/>
<dbReference type="PDBsum" id="1YHQ"/>
<dbReference type="PDBsum" id="1YI2"/>
<dbReference type="PDBsum" id="1YIJ"/>
<dbReference type="PDBsum" id="1YIT"/>
<dbReference type="PDBsum" id="1YJ9"/>
<dbReference type="PDBsum" id="1YJN"/>
<dbReference type="PDBsum" id="1YJW"/>
<dbReference type="PDBsum" id="2OTJ"/>
<dbReference type="PDBsum" id="2OTL"/>
<dbReference type="PDBsum" id="2QA4"/>
<dbReference type="PDBsum" id="2QEX"/>
<dbReference type="PDBsum" id="3CC2"/>
<dbReference type="PDBsum" id="3CC4"/>
<dbReference type="PDBsum" id="3CC7"/>
<dbReference type="PDBsum" id="3CCE"/>
<dbReference type="PDBsum" id="3CCJ"/>
<dbReference type="PDBsum" id="3CCL"/>
<dbReference type="PDBsum" id="3CCM"/>
<dbReference type="PDBsum" id="3CCQ"/>
<dbReference type="PDBsum" id="3CCR"/>
<dbReference type="PDBsum" id="3CCS"/>
<dbReference type="PDBsum" id="3CCU"/>
<dbReference type="PDBsum" id="3CCV"/>
<dbReference type="PDBsum" id="3CD6"/>
<dbReference type="PDBsum" id="3CMA"/>
<dbReference type="PDBsum" id="3CME"/>
<dbReference type="PDBsum" id="3CPW"/>
<dbReference type="PDBsum" id="3CXC"/>
<dbReference type="PDBsum" id="3G4S"/>
<dbReference type="PDBsum" id="3G6E"/>
<dbReference type="PDBsum" id="3G71"/>
<dbReference type="PDBsum" id="3I55"/>
<dbReference type="PDBsum" id="3I56"/>
<dbReference type="PDBsum" id="3OW2"/>
<dbReference type="PDBsum" id="4ADX"/>
<dbReference type="PDBsum" id="4V9F"/>
<dbReference type="SMR" id="P14135"/>
<dbReference type="IntAct" id="P14135">
    <property type="interactions" value="2"/>
</dbReference>
<dbReference type="STRING" id="272569.rrnAC1596"/>
<dbReference type="PaxDb" id="272569-rrnAC1596"/>
<dbReference type="EnsemblBacteria" id="AAV46514">
    <property type="protein sequence ID" value="AAV46514"/>
    <property type="gene ID" value="rrnAC1596"/>
</dbReference>
<dbReference type="GeneID" id="40152561"/>
<dbReference type="KEGG" id="hma:rrnAC1596"/>
<dbReference type="PATRIC" id="fig|272569.17.peg.2285"/>
<dbReference type="eggNOG" id="arCOG04090">
    <property type="taxonomic scope" value="Archaea"/>
</dbReference>
<dbReference type="HOGENOM" id="CLU_065464_0_0_2"/>
<dbReference type="EvolutionaryTrace" id="P14135"/>
<dbReference type="Proteomes" id="UP000001169">
    <property type="component" value="Chromosome I"/>
</dbReference>
<dbReference type="GO" id="GO:0022625">
    <property type="term" value="C:cytosolic large ribosomal subunit"/>
    <property type="evidence" value="ECO:0007669"/>
    <property type="project" value="TreeGrafter"/>
</dbReference>
<dbReference type="GO" id="GO:0019843">
    <property type="term" value="F:rRNA binding"/>
    <property type="evidence" value="ECO:0007669"/>
    <property type="project" value="UniProtKB-UniRule"/>
</dbReference>
<dbReference type="GO" id="GO:0003735">
    <property type="term" value="F:structural constituent of ribosome"/>
    <property type="evidence" value="ECO:0007669"/>
    <property type="project" value="InterPro"/>
</dbReference>
<dbReference type="GO" id="GO:0002181">
    <property type="term" value="P:cytoplasmic translation"/>
    <property type="evidence" value="ECO:0007669"/>
    <property type="project" value="TreeGrafter"/>
</dbReference>
<dbReference type="FunFam" id="3.90.930.12:FF:000008">
    <property type="entry name" value="50S ribosomal protein L6"/>
    <property type="match status" value="1"/>
</dbReference>
<dbReference type="Gene3D" id="3.90.930.12">
    <property type="entry name" value="Ribosomal protein L6, alpha-beta domain"/>
    <property type="match status" value="2"/>
</dbReference>
<dbReference type="HAMAP" id="MF_01365_A">
    <property type="entry name" value="Ribosomal_uL6_A"/>
    <property type="match status" value="1"/>
</dbReference>
<dbReference type="InterPro" id="IPR000702">
    <property type="entry name" value="Ribosomal_uL6-like"/>
</dbReference>
<dbReference type="InterPro" id="IPR036789">
    <property type="entry name" value="Ribosomal_uL6-like_a/b-dom_sf"/>
</dbReference>
<dbReference type="InterPro" id="IPR020040">
    <property type="entry name" value="Ribosomal_uL6_a/b-dom"/>
</dbReference>
<dbReference type="InterPro" id="IPR019907">
    <property type="entry name" value="Ribosomal_uL6_arc"/>
</dbReference>
<dbReference type="InterPro" id="IPR002359">
    <property type="entry name" value="Ribosomal_uL6_CS2"/>
</dbReference>
<dbReference type="NCBIfam" id="NF004037">
    <property type="entry name" value="PRK05518.1"/>
    <property type="match status" value="1"/>
</dbReference>
<dbReference type="NCBIfam" id="TIGR03653">
    <property type="entry name" value="uL6_arch"/>
    <property type="match status" value="1"/>
</dbReference>
<dbReference type="PANTHER" id="PTHR11655:SF16">
    <property type="entry name" value="60S RIBOSOMAL PROTEIN L9"/>
    <property type="match status" value="1"/>
</dbReference>
<dbReference type="PANTHER" id="PTHR11655">
    <property type="entry name" value="60S/50S RIBOSOMAL PROTEIN L6/L9"/>
    <property type="match status" value="1"/>
</dbReference>
<dbReference type="Pfam" id="PF00347">
    <property type="entry name" value="Ribosomal_L6"/>
    <property type="match status" value="2"/>
</dbReference>
<dbReference type="PIRSF" id="PIRSF002162">
    <property type="entry name" value="Ribosomal_L6"/>
    <property type="match status" value="1"/>
</dbReference>
<dbReference type="SUPFAM" id="SSF56053">
    <property type="entry name" value="Ribosomal protein L6"/>
    <property type="match status" value="2"/>
</dbReference>
<dbReference type="PROSITE" id="PS00700">
    <property type="entry name" value="RIBOSOMAL_L6_2"/>
    <property type="match status" value="1"/>
</dbReference>
<comment type="function">
    <text>This protein binds to the 23S rRNA, and is important in its secondary structure. It is located near the subunit interface in the base of the L7/L12 stalk, and near the tRNA binding site of the peptidyltransferase center.</text>
</comment>
<comment type="subunit">
    <text evidence="1 2 3">Part of the 50S ribosomal subunit. Interacts weakly with protein L13.</text>
</comment>
<comment type="similarity">
    <text evidence="1">Belongs to the universal ribosomal protein uL6 family.</text>
</comment>
<keyword id="KW-0002">3D-structure</keyword>
<keyword id="KW-0903">Direct protein sequencing</keyword>
<keyword id="KW-1185">Reference proteome</keyword>
<keyword id="KW-0687">Ribonucleoprotein</keyword>
<keyword id="KW-0689">Ribosomal protein</keyword>
<keyword id="KW-0694">RNA-binding</keyword>
<keyword id="KW-0699">rRNA-binding</keyword>
<protein>
    <recommendedName>
        <fullName evidence="1">Large ribosomal subunit protein uL6</fullName>
    </recommendedName>
    <alternativeName>
        <fullName evidence="6">50S ribosomal protein L6</fullName>
    </alternativeName>
    <alternativeName>
        <fullName>Hl10</fullName>
    </alternativeName>
    <alternativeName>
        <fullName>Hmal6</fullName>
    </alternativeName>
</protein>